<organism>
    <name type="scientific">Aeropyrum pernix (strain ATCC 700893 / DSM 11879 / JCM 9820 / NBRC 100138 / K1)</name>
    <dbReference type="NCBI Taxonomy" id="272557"/>
    <lineage>
        <taxon>Archaea</taxon>
        <taxon>Thermoproteota</taxon>
        <taxon>Thermoprotei</taxon>
        <taxon>Desulfurococcales</taxon>
        <taxon>Desulfurococcaceae</taxon>
        <taxon>Aeropyrum</taxon>
    </lineage>
</organism>
<evidence type="ECO:0000255" key="1">
    <source>
        <dbReference type="HAMAP-Rule" id="MF_00511"/>
    </source>
</evidence>
<evidence type="ECO:0000305" key="2"/>
<reference key="1">
    <citation type="journal article" date="1999" name="DNA Res.">
        <title>Complete genome sequence of an aerobic hyper-thermophilic crenarchaeon, Aeropyrum pernix K1.</title>
        <authorList>
            <person name="Kawarabayasi Y."/>
            <person name="Hino Y."/>
            <person name="Horikawa H."/>
            <person name="Yamazaki S."/>
            <person name="Haikawa Y."/>
            <person name="Jin-no K."/>
            <person name="Takahashi M."/>
            <person name="Sekine M."/>
            <person name="Baba S."/>
            <person name="Ankai A."/>
            <person name="Kosugi H."/>
            <person name="Hosoyama A."/>
            <person name="Fukui S."/>
            <person name="Nagai Y."/>
            <person name="Nishijima K."/>
            <person name="Nakazawa H."/>
            <person name="Takamiya M."/>
            <person name="Masuda S."/>
            <person name="Funahashi T."/>
            <person name="Tanaka T."/>
            <person name="Kudoh Y."/>
            <person name="Yamazaki J."/>
            <person name="Kushida N."/>
            <person name="Oguchi A."/>
            <person name="Aoki K."/>
            <person name="Kubota K."/>
            <person name="Nakamura Y."/>
            <person name="Nomura N."/>
            <person name="Sako Y."/>
            <person name="Kikuchi H."/>
        </authorList>
    </citation>
    <scope>NUCLEOTIDE SEQUENCE [LARGE SCALE GENOMIC DNA]</scope>
    <source>
        <strain>ATCC 700893 / DSM 11879 / JCM 9820 / NBRC 100138 / K1</strain>
    </source>
</reference>
<sequence>MGKVRIRLVKRTARKLLEKYPDLFTGDFEHNKRVVSQLIEYRSKKLRNQIAGYITHLVNMASKRKKAEEASARI</sequence>
<protein>
    <recommendedName>
        <fullName evidence="1">Small ribosomal subunit protein eS17</fullName>
    </recommendedName>
    <alternativeName>
        <fullName evidence="2">30S ribosomal protein S17e</fullName>
    </alternativeName>
</protein>
<gene>
    <name evidence="1" type="primary">rps17e</name>
    <name type="ordered locus">APE_2071a</name>
    <name type="ORF">APES067</name>
</gene>
<name>RS17E_AERPE</name>
<keyword id="KW-1185">Reference proteome</keyword>
<keyword id="KW-0687">Ribonucleoprotein</keyword>
<keyword id="KW-0689">Ribosomal protein</keyword>
<accession>Q9YA67</accession>
<comment type="similarity">
    <text evidence="1">Belongs to the eukaryotic ribosomal protein eS17 family.</text>
</comment>
<proteinExistence type="inferred from homology"/>
<feature type="chain" id="PRO_0000141548" description="Small ribosomal subunit protein eS17">
    <location>
        <begin position="1"/>
        <end position="74"/>
    </location>
</feature>
<dbReference type="EMBL" id="BA000002">
    <property type="protein sequence ID" value="BAA81082.1"/>
    <property type="molecule type" value="Genomic_DNA"/>
</dbReference>
<dbReference type="PIR" id="B72512">
    <property type="entry name" value="B72512"/>
</dbReference>
<dbReference type="RefSeq" id="WP_010866775.1">
    <property type="nucleotide sequence ID" value="NC_000854.2"/>
</dbReference>
<dbReference type="SMR" id="Q9YA67"/>
<dbReference type="STRING" id="272557.APE_2071a"/>
<dbReference type="EnsemblBacteria" id="BAA81082">
    <property type="protein sequence ID" value="BAA81082"/>
    <property type="gene ID" value="APE_2071a"/>
</dbReference>
<dbReference type="GeneID" id="1445171"/>
<dbReference type="KEGG" id="ape:APE_2071a"/>
<dbReference type="eggNOG" id="arCOG01885">
    <property type="taxonomic scope" value="Archaea"/>
</dbReference>
<dbReference type="Proteomes" id="UP000002518">
    <property type="component" value="Chromosome"/>
</dbReference>
<dbReference type="GO" id="GO:0005829">
    <property type="term" value="C:cytosol"/>
    <property type="evidence" value="ECO:0007669"/>
    <property type="project" value="UniProtKB-ARBA"/>
</dbReference>
<dbReference type="GO" id="GO:1990904">
    <property type="term" value="C:ribonucleoprotein complex"/>
    <property type="evidence" value="ECO:0007669"/>
    <property type="project" value="UniProtKB-KW"/>
</dbReference>
<dbReference type="GO" id="GO:0005840">
    <property type="term" value="C:ribosome"/>
    <property type="evidence" value="ECO:0007669"/>
    <property type="project" value="UniProtKB-KW"/>
</dbReference>
<dbReference type="GO" id="GO:0003735">
    <property type="term" value="F:structural constituent of ribosome"/>
    <property type="evidence" value="ECO:0007669"/>
    <property type="project" value="InterPro"/>
</dbReference>
<dbReference type="GO" id="GO:0006412">
    <property type="term" value="P:translation"/>
    <property type="evidence" value="ECO:0007669"/>
    <property type="project" value="UniProtKB-UniRule"/>
</dbReference>
<dbReference type="Gene3D" id="1.10.60.20">
    <property type="entry name" value="Ribosomal protein S17e-like"/>
    <property type="match status" value="1"/>
</dbReference>
<dbReference type="HAMAP" id="MF_00511">
    <property type="entry name" value="Ribosomal_eS17"/>
    <property type="match status" value="1"/>
</dbReference>
<dbReference type="InterPro" id="IPR001210">
    <property type="entry name" value="Ribosomal_eS17"/>
</dbReference>
<dbReference type="InterPro" id="IPR018273">
    <property type="entry name" value="Ribosomal_eS17_CS"/>
</dbReference>
<dbReference type="InterPro" id="IPR036401">
    <property type="entry name" value="Ribosomal_eS17_sf"/>
</dbReference>
<dbReference type="NCBIfam" id="NF002242">
    <property type="entry name" value="PRK01151.1"/>
    <property type="match status" value="1"/>
</dbReference>
<dbReference type="PANTHER" id="PTHR10732">
    <property type="entry name" value="40S RIBOSOMAL PROTEIN S17"/>
    <property type="match status" value="1"/>
</dbReference>
<dbReference type="PANTHER" id="PTHR10732:SF0">
    <property type="entry name" value="40S RIBOSOMAL PROTEIN S17"/>
    <property type="match status" value="1"/>
</dbReference>
<dbReference type="Pfam" id="PF00833">
    <property type="entry name" value="Ribosomal_S17e"/>
    <property type="match status" value="1"/>
</dbReference>
<dbReference type="SUPFAM" id="SSF116820">
    <property type="entry name" value="Rps17e-like"/>
    <property type="match status" value="1"/>
</dbReference>
<dbReference type="PROSITE" id="PS00712">
    <property type="entry name" value="RIBOSOMAL_S17E"/>
    <property type="match status" value="1"/>
</dbReference>